<organism>
    <name type="scientific">Legionella pneumophila (strain Lens)</name>
    <dbReference type="NCBI Taxonomy" id="297245"/>
    <lineage>
        <taxon>Bacteria</taxon>
        <taxon>Pseudomonadati</taxon>
        <taxon>Pseudomonadota</taxon>
        <taxon>Gammaproteobacteria</taxon>
        <taxon>Legionellales</taxon>
        <taxon>Legionellaceae</taxon>
        <taxon>Legionella</taxon>
    </lineage>
</organism>
<protein>
    <recommendedName>
        <fullName evidence="1">Large ribosomal subunit protein bL21</fullName>
    </recommendedName>
    <alternativeName>
        <fullName evidence="2">50S ribosomal protein L21</fullName>
    </alternativeName>
</protein>
<keyword id="KW-0687">Ribonucleoprotein</keyword>
<keyword id="KW-0689">Ribosomal protein</keyword>
<keyword id="KW-0694">RNA-binding</keyword>
<keyword id="KW-0699">rRNA-binding</keyword>
<accession>Q5WTE9</accession>
<comment type="function">
    <text evidence="1">This protein binds to 23S rRNA in the presence of protein L20.</text>
</comment>
<comment type="subunit">
    <text evidence="1">Part of the 50S ribosomal subunit. Contacts protein L20.</text>
</comment>
<comment type="similarity">
    <text evidence="1">Belongs to the bacterial ribosomal protein bL21 family.</text>
</comment>
<gene>
    <name evidence="1" type="primary">rplU</name>
    <name type="ordered locus">lpl2576</name>
</gene>
<name>RL21_LEGPL</name>
<proteinExistence type="inferred from homology"/>
<sequence>MYAVIKTGGKQYTVKEGDVLKIEMLPENVGNEIKFSEVLMLVDGDKVTCGAPFVAKATVKAEVLDHGRHKKVKIIKFRRRKHHMKQMGHRQYYSQVKITAIGK</sequence>
<feature type="chain" id="PRO_0000269334" description="Large ribosomal subunit protein bL21">
    <location>
        <begin position="1"/>
        <end position="103"/>
    </location>
</feature>
<evidence type="ECO:0000255" key="1">
    <source>
        <dbReference type="HAMAP-Rule" id="MF_01363"/>
    </source>
</evidence>
<evidence type="ECO:0000305" key="2"/>
<reference key="1">
    <citation type="journal article" date="2004" name="Nat. Genet.">
        <title>Evidence in the Legionella pneumophila genome for exploitation of host cell functions and high genome plasticity.</title>
        <authorList>
            <person name="Cazalet C."/>
            <person name="Rusniok C."/>
            <person name="Brueggemann H."/>
            <person name="Zidane N."/>
            <person name="Magnier A."/>
            <person name="Ma L."/>
            <person name="Tichit M."/>
            <person name="Jarraud S."/>
            <person name="Bouchier C."/>
            <person name="Vandenesch F."/>
            <person name="Kunst F."/>
            <person name="Etienne J."/>
            <person name="Glaser P."/>
            <person name="Buchrieser C."/>
        </authorList>
    </citation>
    <scope>NUCLEOTIDE SEQUENCE [LARGE SCALE GENOMIC DNA]</scope>
    <source>
        <strain>Lens</strain>
    </source>
</reference>
<dbReference type="EMBL" id="CR628337">
    <property type="protein sequence ID" value="CAH16817.1"/>
    <property type="molecule type" value="Genomic_DNA"/>
</dbReference>
<dbReference type="RefSeq" id="WP_011216522.1">
    <property type="nucleotide sequence ID" value="NC_006369.1"/>
</dbReference>
<dbReference type="SMR" id="Q5WTE9"/>
<dbReference type="KEGG" id="lpf:lpl2576"/>
<dbReference type="LegioList" id="lpl2576"/>
<dbReference type="HOGENOM" id="CLU_061463_3_3_6"/>
<dbReference type="Proteomes" id="UP000002517">
    <property type="component" value="Chromosome"/>
</dbReference>
<dbReference type="GO" id="GO:0005737">
    <property type="term" value="C:cytoplasm"/>
    <property type="evidence" value="ECO:0007669"/>
    <property type="project" value="UniProtKB-ARBA"/>
</dbReference>
<dbReference type="GO" id="GO:1990904">
    <property type="term" value="C:ribonucleoprotein complex"/>
    <property type="evidence" value="ECO:0007669"/>
    <property type="project" value="UniProtKB-KW"/>
</dbReference>
<dbReference type="GO" id="GO:0005840">
    <property type="term" value="C:ribosome"/>
    <property type="evidence" value="ECO:0007669"/>
    <property type="project" value="UniProtKB-KW"/>
</dbReference>
<dbReference type="GO" id="GO:0019843">
    <property type="term" value="F:rRNA binding"/>
    <property type="evidence" value="ECO:0007669"/>
    <property type="project" value="UniProtKB-UniRule"/>
</dbReference>
<dbReference type="GO" id="GO:0003735">
    <property type="term" value="F:structural constituent of ribosome"/>
    <property type="evidence" value="ECO:0007669"/>
    <property type="project" value="InterPro"/>
</dbReference>
<dbReference type="GO" id="GO:0006412">
    <property type="term" value="P:translation"/>
    <property type="evidence" value="ECO:0007669"/>
    <property type="project" value="UniProtKB-UniRule"/>
</dbReference>
<dbReference type="HAMAP" id="MF_01363">
    <property type="entry name" value="Ribosomal_bL21"/>
    <property type="match status" value="1"/>
</dbReference>
<dbReference type="InterPro" id="IPR028909">
    <property type="entry name" value="bL21-like"/>
</dbReference>
<dbReference type="InterPro" id="IPR036164">
    <property type="entry name" value="bL21-like_sf"/>
</dbReference>
<dbReference type="InterPro" id="IPR001787">
    <property type="entry name" value="Ribosomal_bL21"/>
</dbReference>
<dbReference type="InterPro" id="IPR018258">
    <property type="entry name" value="Ribosomal_bL21_CS"/>
</dbReference>
<dbReference type="NCBIfam" id="TIGR00061">
    <property type="entry name" value="L21"/>
    <property type="match status" value="1"/>
</dbReference>
<dbReference type="PANTHER" id="PTHR21349">
    <property type="entry name" value="50S RIBOSOMAL PROTEIN L21"/>
    <property type="match status" value="1"/>
</dbReference>
<dbReference type="PANTHER" id="PTHR21349:SF0">
    <property type="entry name" value="LARGE RIBOSOMAL SUBUNIT PROTEIN BL21M"/>
    <property type="match status" value="1"/>
</dbReference>
<dbReference type="Pfam" id="PF00829">
    <property type="entry name" value="Ribosomal_L21p"/>
    <property type="match status" value="1"/>
</dbReference>
<dbReference type="SUPFAM" id="SSF141091">
    <property type="entry name" value="L21p-like"/>
    <property type="match status" value="1"/>
</dbReference>
<dbReference type="PROSITE" id="PS01169">
    <property type="entry name" value="RIBOSOMAL_L21"/>
    <property type="match status" value="1"/>
</dbReference>